<comment type="function">
    <text evidence="1">Associates with the EF-Tu.GDP complex and induces the exchange of GDP to GTP. It remains bound to the aminoacyl-tRNA.EF-Tu.GTP complex up to the GTP hydrolysis stage on the ribosome.</text>
</comment>
<comment type="subcellular location">
    <subcellularLocation>
        <location evidence="1">Cytoplasm</location>
    </subcellularLocation>
</comment>
<comment type="similarity">
    <text evidence="1">Belongs to the EF-Ts family.</text>
</comment>
<protein>
    <recommendedName>
        <fullName evidence="1">Elongation factor Ts</fullName>
        <shortName evidence="1">EF-Ts</shortName>
    </recommendedName>
</protein>
<keyword id="KW-0963">Cytoplasm</keyword>
<keyword id="KW-0251">Elongation factor</keyword>
<keyword id="KW-0648">Protein biosynthesis</keyword>
<keyword id="KW-1185">Reference proteome</keyword>
<accession>Q2RU08</accession>
<reference key="1">
    <citation type="journal article" date="2011" name="Stand. Genomic Sci.">
        <title>Complete genome sequence of Rhodospirillum rubrum type strain (S1).</title>
        <authorList>
            <person name="Munk A.C."/>
            <person name="Copeland A."/>
            <person name="Lucas S."/>
            <person name="Lapidus A."/>
            <person name="Del Rio T.G."/>
            <person name="Barry K."/>
            <person name="Detter J.C."/>
            <person name="Hammon N."/>
            <person name="Israni S."/>
            <person name="Pitluck S."/>
            <person name="Brettin T."/>
            <person name="Bruce D."/>
            <person name="Han C."/>
            <person name="Tapia R."/>
            <person name="Gilna P."/>
            <person name="Schmutz J."/>
            <person name="Larimer F."/>
            <person name="Land M."/>
            <person name="Kyrpides N.C."/>
            <person name="Mavromatis K."/>
            <person name="Richardson P."/>
            <person name="Rohde M."/>
            <person name="Goeker M."/>
            <person name="Klenk H.P."/>
            <person name="Zhang Y."/>
            <person name="Roberts G.P."/>
            <person name="Reslewic S."/>
            <person name="Schwartz D.C."/>
        </authorList>
    </citation>
    <scope>NUCLEOTIDE SEQUENCE [LARGE SCALE GENOMIC DNA]</scope>
    <source>
        <strain>ATCC 11170 / ATH 1.1.1 / DSM 467 / LMG 4362 / NCIMB 8255 / S1</strain>
    </source>
</reference>
<organism>
    <name type="scientific">Rhodospirillum rubrum (strain ATCC 11170 / ATH 1.1.1 / DSM 467 / LMG 4362 / NCIMB 8255 / S1)</name>
    <dbReference type="NCBI Taxonomy" id="269796"/>
    <lineage>
        <taxon>Bacteria</taxon>
        <taxon>Pseudomonadati</taxon>
        <taxon>Pseudomonadota</taxon>
        <taxon>Alphaproteobacteria</taxon>
        <taxon>Rhodospirillales</taxon>
        <taxon>Rhodospirillaceae</taxon>
        <taxon>Rhodospirillum</taxon>
    </lineage>
</organism>
<name>EFTS_RHORT</name>
<sequence>MAEITAALVKSLREQTGAGMMDCKKALTETAGDVEAAIDWLRKKGLAAAAKKAGRTASEGLVGIATAGTAGAVVEVNAETDFVARNDTFQGFVETVASLTLAAKGDIEALKSAAYPGGEGRTVEAQVTHLIATIGENMQLRRSAALEVEQGVVTSYMHTAVKPGLGKIGVLVALKSAADPAKLDELGRQIAMHVAAAQPRYAFISEVDAEALDRERSVLSEQAKASGKPDAIIEKMVEGRLRKFYEEVVLTEQIFVIDGETKIAKVLEKAGKDLGAPIELGGFVRFQLGEGIEKEESDFAAEVAAQLKK</sequence>
<dbReference type="EMBL" id="CP000230">
    <property type="protein sequence ID" value="ABC22387.1"/>
    <property type="molecule type" value="Genomic_DNA"/>
</dbReference>
<dbReference type="RefSeq" id="WP_011389462.1">
    <property type="nucleotide sequence ID" value="NC_007643.1"/>
</dbReference>
<dbReference type="RefSeq" id="YP_426674.1">
    <property type="nucleotide sequence ID" value="NC_007643.1"/>
</dbReference>
<dbReference type="SMR" id="Q2RU08"/>
<dbReference type="STRING" id="269796.Rru_A1587"/>
<dbReference type="EnsemblBacteria" id="ABC22387">
    <property type="protein sequence ID" value="ABC22387"/>
    <property type="gene ID" value="Rru_A1587"/>
</dbReference>
<dbReference type="KEGG" id="rru:Rru_A1587"/>
<dbReference type="PATRIC" id="fig|269796.9.peg.1661"/>
<dbReference type="eggNOG" id="COG0264">
    <property type="taxonomic scope" value="Bacteria"/>
</dbReference>
<dbReference type="HOGENOM" id="CLU_047155_2_0_5"/>
<dbReference type="PhylomeDB" id="Q2RU08"/>
<dbReference type="Proteomes" id="UP000001929">
    <property type="component" value="Chromosome"/>
</dbReference>
<dbReference type="GO" id="GO:0005737">
    <property type="term" value="C:cytoplasm"/>
    <property type="evidence" value="ECO:0007669"/>
    <property type="project" value="UniProtKB-SubCell"/>
</dbReference>
<dbReference type="GO" id="GO:0003746">
    <property type="term" value="F:translation elongation factor activity"/>
    <property type="evidence" value="ECO:0007669"/>
    <property type="project" value="UniProtKB-UniRule"/>
</dbReference>
<dbReference type="CDD" id="cd14275">
    <property type="entry name" value="UBA_EF-Ts"/>
    <property type="match status" value="1"/>
</dbReference>
<dbReference type="FunFam" id="1.10.286.20:FF:000001">
    <property type="entry name" value="Elongation factor Ts"/>
    <property type="match status" value="1"/>
</dbReference>
<dbReference type="FunFam" id="1.10.8.10:FF:000001">
    <property type="entry name" value="Elongation factor Ts"/>
    <property type="match status" value="1"/>
</dbReference>
<dbReference type="Gene3D" id="1.10.286.20">
    <property type="match status" value="1"/>
</dbReference>
<dbReference type="Gene3D" id="1.10.8.10">
    <property type="entry name" value="DNA helicase RuvA subunit, C-terminal domain"/>
    <property type="match status" value="1"/>
</dbReference>
<dbReference type="Gene3D" id="3.30.479.20">
    <property type="entry name" value="Elongation factor Ts, dimerisation domain"/>
    <property type="match status" value="2"/>
</dbReference>
<dbReference type="HAMAP" id="MF_00050">
    <property type="entry name" value="EF_Ts"/>
    <property type="match status" value="1"/>
</dbReference>
<dbReference type="InterPro" id="IPR036402">
    <property type="entry name" value="EF-Ts_dimer_sf"/>
</dbReference>
<dbReference type="InterPro" id="IPR001816">
    <property type="entry name" value="Transl_elong_EFTs/EF1B"/>
</dbReference>
<dbReference type="InterPro" id="IPR014039">
    <property type="entry name" value="Transl_elong_EFTs/EF1B_dimer"/>
</dbReference>
<dbReference type="InterPro" id="IPR018101">
    <property type="entry name" value="Transl_elong_Ts_CS"/>
</dbReference>
<dbReference type="InterPro" id="IPR009060">
    <property type="entry name" value="UBA-like_sf"/>
</dbReference>
<dbReference type="NCBIfam" id="TIGR00116">
    <property type="entry name" value="tsf"/>
    <property type="match status" value="1"/>
</dbReference>
<dbReference type="PANTHER" id="PTHR11741">
    <property type="entry name" value="ELONGATION FACTOR TS"/>
    <property type="match status" value="1"/>
</dbReference>
<dbReference type="PANTHER" id="PTHR11741:SF0">
    <property type="entry name" value="ELONGATION FACTOR TS, MITOCHONDRIAL"/>
    <property type="match status" value="1"/>
</dbReference>
<dbReference type="Pfam" id="PF00889">
    <property type="entry name" value="EF_TS"/>
    <property type="match status" value="1"/>
</dbReference>
<dbReference type="SUPFAM" id="SSF54713">
    <property type="entry name" value="Elongation factor Ts (EF-Ts), dimerisation domain"/>
    <property type="match status" value="2"/>
</dbReference>
<dbReference type="SUPFAM" id="SSF46934">
    <property type="entry name" value="UBA-like"/>
    <property type="match status" value="1"/>
</dbReference>
<dbReference type="PROSITE" id="PS01126">
    <property type="entry name" value="EF_TS_1"/>
    <property type="match status" value="1"/>
</dbReference>
<dbReference type="PROSITE" id="PS01127">
    <property type="entry name" value="EF_TS_2"/>
    <property type="match status" value="1"/>
</dbReference>
<gene>
    <name evidence="1" type="primary">tsf</name>
    <name type="ordered locus">Rru_A1587</name>
</gene>
<proteinExistence type="inferred from homology"/>
<evidence type="ECO:0000255" key="1">
    <source>
        <dbReference type="HAMAP-Rule" id="MF_00050"/>
    </source>
</evidence>
<feature type="chain" id="PRO_0000241520" description="Elongation factor Ts">
    <location>
        <begin position="1"/>
        <end position="309"/>
    </location>
</feature>
<feature type="region of interest" description="Involved in Mg(2+) ion dislocation from EF-Tu" evidence="1">
    <location>
        <begin position="80"/>
        <end position="83"/>
    </location>
</feature>